<proteinExistence type="inferred from homology"/>
<sequence length="95" mass="9751">MAWARDEGGAAVLEILVQPRASRTRAVGEHDGRLKIQLAAPPVDGAANAALVEFLAAALGVRRADVELLRGETGRRKTVRVAGITAAAAVAALAS</sequence>
<gene>
    <name type="ordered locus">A2cp1_1215</name>
</gene>
<dbReference type="EMBL" id="CP001359">
    <property type="protein sequence ID" value="ACL64559.1"/>
    <property type="molecule type" value="Genomic_DNA"/>
</dbReference>
<dbReference type="RefSeq" id="WP_012632544.1">
    <property type="nucleotide sequence ID" value="NC_011891.1"/>
</dbReference>
<dbReference type="SMR" id="B8JFX1"/>
<dbReference type="KEGG" id="acp:A2cp1_1215"/>
<dbReference type="HOGENOM" id="CLU_130694_5_0_7"/>
<dbReference type="Proteomes" id="UP000007089">
    <property type="component" value="Chromosome"/>
</dbReference>
<dbReference type="GO" id="GO:0005737">
    <property type="term" value="C:cytoplasm"/>
    <property type="evidence" value="ECO:0007669"/>
    <property type="project" value="TreeGrafter"/>
</dbReference>
<dbReference type="Gene3D" id="3.30.1200.10">
    <property type="entry name" value="YggU-like"/>
    <property type="match status" value="1"/>
</dbReference>
<dbReference type="HAMAP" id="MF_00634">
    <property type="entry name" value="UPF0235"/>
    <property type="match status" value="1"/>
</dbReference>
<dbReference type="InterPro" id="IPR003746">
    <property type="entry name" value="DUF167"/>
</dbReference>
<dbReference type="InterPro" id="IPR036591">
    <property type="entry name" value="YggU-like_sf"/>
</dbReference>
<dbReference type="NCBIfam" id="TIGR00251">
    <property type="entry name" value="DUF167 family protein"/>
    <property type="match status" value="1"/>
</dbReference>
<dbReference type="PANTHER" id="PTHR13420">
    <property type="entry name" value="UPF0235 PROTEIN C15ORF40"/>
    <property type="match status" value="1"/>
</dbReference>
<dbReference type="PANTHER" id="PTHR13420:SF7">
    <property type="entry name" value="UPF0235 PROTEIN C15ORF40"/>
    <property type="match status" value="1"/>
</dbReference>
<dbReference type="Pfam" id="PF02594">
    <property type="entry name" value="DUF167"/>
    <property type="match status" value="1"/>
</dbReference>
<dbReference type="SMART" id="SM01152">
    <property type="entry name" value="DUF167"/>
    <property type="match status" value="1"/>
</dbReference>
<dbReference type="SUPFAM" id="SSF69786">
    <property type="entry name" value="YggU-like"/>
    <property type="match status" value="1"/>
</dbReference>
<name>Y1215_ANAD2</name>
<feature type="chain" id="PRO_1000147337" description="UPF0235 protein A2cp1_1215">
    <location>
        <begin position="1"/>
        <end position="95"/>
    </location>
</feature>
<organism>
    <name type="scientific">Anaeromyxobacter dehalogenans (strain 2CP-1 / ATCC BAA-258)</name>
    <dbReference type="NCBI Taxonomy" id="455488"/>
    <lineage>
        <taxon>Bacteria</taxon>
        <taxon>Pseudomonadati</taxon>
        <taxon>Myxococcota</taxon>
        <taxon>Myxococcia</taxon>
        <taxon>Myxococcales</taxon>
        <taxon>Cystobacterineae</taxon>
        <taxon>Anaeromyxobacteraceae</taxon>
        <taxon>Anaeromyxobacter</taxon>
    </lineage>
</organism>
<reference key="1">
    <citation type="submission" date="2009-01" db="EMBL/GenBank/DDBJ databases">
        <title>Complete sequence of Anaeromyxobacter dehalogenans 2CP-1.</title>
        <authorList>
            <person name="Lucas S."/>
            <person name="Copeland A."/>
            <person name="Lapidus A."/>
            <person name="Glavina del Rio T."/>
            <person name="Dalin E."/>
            <person name="Tice H."/>
            <person name="Bruce D."/>
            <person name="Goodwin L."/>
            <person name="Pitluck S."/>
            <person name="Saunders E."/>
            <person name="Brettin T."/>
            <person name="Detter J.C."/>
            <person name="Han C."/>
            <person name="Larimer F."/>
            <person name="Land M."/>
            <person name="Hauser L."/>
            <person name="Kyrpides N."/>
            <person name="Ovchinnikova G."/>
            <person name="Beliaev A.S."/>
            <person name="Richardson P."/>
        </authorList>
    </citation>
    <scope>NUCLEOTIDE SEQUENCE [LARGE SCALE GENOMIC DNA]</scope>
    <source>
        <strain>2CP-1 / ATCC BAA-258</strain>
    </source>
</reference>
<accession>B8JFX1</accession>
<evidence type="ECO:0000255" key="1">
    <source>
        <dbReference type="HAMAP-Rule" id="MF_00634"/>
    </source>
</evidence>
<comment type="similarity">
    <text evidence="1">Belongs to the UPF0235 family.</text>
</comment>
<protein>
    <recommendedName>
        <fullName evidence="1">UPF0235 protein A2cp1_1215</fullName>
    </recommendedName>
</protein>